<protein>
    <recommendedName>
        <fullName>Protein lin-52 homolog</fullName>
    </recommendedName>
</protein>
<feature type="chain" id="PRO_0000273497" description="Protein lin-52 homolog">
    <location>
        <begin position="1"/>
        <end position="112"/>
    </location>
</feature>
<evidence type="ECO:0000250" key="1"/>
<evidence type="ECO:0000305" key="2"/>
<keyword id="KW-0002">3D-structure</keyword>
<keyword id="KW-1185">Reference proteome</keyword>
<accession>Q5ZJQ3</accession>
<reference key="1">
    <citation type="journal article" date="2005" name="Genome Biol.">
        <title>Full-length cDNAs from chicken bursal lymphocytes to facilitate gene function analysis.</title>
        <authorList>
            <person name="Caldwell R.B."/>
            <person name="Kierzek A.M."/>
            <person name="Arakawa H."/>
            <person name="Bezzubov Y."/>
            <person name="Zaim J."/>
            <person name="Fiedler P."/>
            <person name="Kutter S."/>
            <person name="Blagodatski A."/>
            <person name="Kostovska D."/>
            <person name="Koter M."/>
            <person name="Plachy J."/>
            <person name="Carninci P."/>
            <person name="Hayashizaki Y."/>
            <person name="Buerstedde J.-M."/>
        </authorList>
    </citation>
    <scope>NUCLEOTIDE SEQUENCE [LARGE SCALE MRNA]</scope>
    <source>
        <strain>CB</strain>
        <tissue>Bursa of Fabricius</tissue>
    </source>
</reference>
<comment type="subunit">
    <text evidence="1">Component of the DREAM complex.</text>
</comment>
<comment type="similarity">
    <text evidence="2">Belongs to the lin-52 family.</text>
</comment>
<gene>
    <name type="primary">LIN52</name>
    <name type="ORF">RCJMB04_16g11</name>
</gene>
<name>LIN52_CHICK</name>
<proteinExistence type="evidence at protein level"/>
<organism>
    <name type="scientific">Gallus gallus</name>
    <name type="common">Chicken</name>
    <dbReference type="NCBI Taxonomy" id="9031"/>
    <lineage>
        <taxon>Eukaryota</taxon>
        <taxon>Metazoa</taxon>
        <taxon>Chordata</taxon>
        <taxon>Craniata</taxon>
        <taxon>Vertebrata</taxon>
        <taxon>Euteleostomi</taxon>
        <taxon>Archelosauria</taxon>
        <taxon>Archosauria</taxon>
        <taxon>Dinosauria</taxon>
        <taxon>Saurischia</taxon>
        <taxon>Theropoda</taxon>
        <taxon>Coelurosauria</taxon>
        <taxon>Aves</taxon>
        <taxon>Neognathae</taxon>
        <taxon>Galloanserae</taxon>
        <taxon>Galliformes</taxon>
        <taxon>Phasianidae</taxon>
        <taxon>Phasianinae</taxon>
        <taxon>Gallus</taxon>
    </lineage>
</organism>
<sequence>MAAPGDGADLEASLLSFEKLDRASPDLWPEQLPGVAEFAASFKSPITSSPPKWMAELENDDIDMLKELGSLTTANLMEKVRGLQNLAYQLGLDESREMTRGKFLNILEKPKK</sequence>
<dbReference type="EMBL" id="AJ720381">
    <property type="protein sequence ID" value="CAG32040.1"/>
    <property type="molecule type" value="mRNA"/>
</dbReference>
<dbReference type="RefSeq" id="NP_001007938.1">
    <property type="nucleotide sequence ID" value="NM_001007937.2"/>
</dbReference>
<dbReference type="PDB" id="4YOS">
    <property type="method" value="X-ray"/>
    <property type="resolution" value="2.30 A"/>
    <property type="chains" value="E=11-30"/>
</dbReference>
<dbReference type="PDBsum" id="4YOS"/>
<dbReference type="SMR" id="Q5ZJQ3"/>
<dbReference type="FunCoup" id="Q5ZJQ3">
    <property type="interactions" value="298"/>
</dbReference>
<dbReference type="STRING" id="9031.ENSGALP00000068524"/>
<dbReference type="PaxDb" id="9031-ENSGALP00000031928"/>
<dbReference type="GeneID" id="423346"/>
<dbReference type="KEGG" id="gga:423346"/>
<dbReference type="CTD" id="91750"/>
<dbReference type="VEuPathDB" id="HostDB:geneid_423346"/>
<dbReference type="eggNOG" id="KOG4402">
    <property type="taxonomic scope" value="Eukaryota"/>
</dbReference>
<dbReference type="HOGENOM" id="CLU_143062_1_0_1"/>
<dbReference type="InParanoid" id="Q5ZJQ3"/>
<dbReference type="OMA" id="NVQNTAY"/>
<dbReference type="OrthoDB" id="5834362at2759"/>
<dbReference type="PhylomeDB" id="Q5ZJQ3"/>
<dbReference type="Reactome" id="R-GGA-1538133">
    <property type="pathway name" value="G0 and Early G1"/>
</dbReference>
<dbReference type="EvolutionaryTrace" id="Q5ZJQ3"/>
<dbReference type="PRO" id="PR:Q5ZJQ3"/>
<dbReference type="Proteomes" id="UP000000539">
    <property type="component" value="Chromosome 5"/>
</dbReference>
<dbReference type="Bgee" id="ENSGALG00000020419">
    <property type="expression patterns" value="Expressed in spermatid and 13 other cell types or tissues"/>
</dbReference>
<dbReference type="GO" id="GO:0070176">
    <property type="term" value="C:DRM complex"/>
    <property type="evidence" value="ECO:0007669"/>
    <property type="project" value="InterPro"/>
</dbReference>
<dbReference type="GO" id="GO:0006355">
    <property type="term" value="P:regulation of DNA-templated transcription"/>
    <property type="evidence" value="ECO:0007669"/>
    <property type="project" value="InterPro"/>
</dbReference>
<dbReference type="InterPro" id="IPR018737">
    <property type="entry name" value="DREAM_LIN52"/>
</dbReference>
<dbReference type="PANTHER" id="PTHR31489">
    <property type="entry name" value="LIN52 FAMILY MEMBER"/>
    <property type="match status" value="1"/>
</dbReference>
<dbReference type="PANTHER" id="PTHR31489:SF2">
    <property type="entry name" value="PROTEIN LIN-52 HOMOLOG"/>
    <property type="match status" value="1"/>
</dbReference>
<dbReference type="Pfam" id="PF10044">
    <property type="entry name" value="LIN52"/>
    <property type="match status" value="1"/>
</dbReference>